<accession>A4WBE8</accession>
<reference key="1">
    <citation type="journal article" date="2010" name="PLoS Genet.">
        <title>Genome sequence of the plant growth promoting endophytic bacterium Enterobacter sp. 638.</title>
        <authorList>
            <person name="Taghavi S."/>
            <person name="van der Lelie D."/>
            <person name="Hoffman A."/>
            <person name="Zhang Y.B."/>
            <person name="Walla M.D."/>
            <person name="Vangronsveld J."/>
            <person name="Newman L."/>
            <person name="Monchy S."/>
        </authorList>
    </citation>
    <scope>NUCLEOTIDE SEQUENCE [LARGE SCALE GENOMIC DNA]</scope>
    <source>
        <strain>638</strain>
    </source>
</reference>
<comment type="function">
    <text evidence="1">Murein-degrading enzyme. May play a role in recycling of muropeptides during cell elongation and/or cell division. Preferentially cleaves at a distance of more than two disaccharide units from the ends of the glycan chain.</text>
</comment>
<comment type="catalytic activity">
    <reaction evidence="1">
        <text>Endolytic cleavage of the (1-&gt;4)-beta-glycosidic linkage between N-acetylmuramic acid (MurNAc) and N-acetylglucosamine (GlcNAc) residues in peptidoglycan with concomitant formation of a 1,6-anhydrobond in the MurNAc residue.</text>
        <dbReference type="EC" id="4.2.2.n2"/>
    </reaction>
</comment>
<comment type="subcellular location">
    <subcellularLocation>
        <location evidence="1">Cell outer membrane</location>
        <topology evidence="1">Lipid-anchor</topology>
    </subcellularLocation>
</comment>
<comment type="similarity">
    <text evidence="1">Belongs to the transglycosylase Slt family.</text>
</comment>
<organism>
    <name type="scientific">Enterobacter sp. (strain 638)</name>
    <dbReference type="NCBI Taxonomy" id="399742"/>
    <lineage>
        <taxon>Bacteria</taxon>
        <taxon>Pseudomonadati</taxon>
        <taxon>Pseudomonadota</taxon>
        <taxon>Gammaproteobacteria</taxon>
        <taxon>Enterobacterales</taxon>
        <taxon>Enterobacteriaceae</taxon>
        <taxon>Enterobacter</taxon>
    </lineage>
</organism>
<sequence>MKLRWFAFLMVLLAGCSSKKDYQNPPWNPEVPVKRAMQWMPISEKAGKAWGVSPRLITAIIAVESGGNPTLVSKSNAVGLMQLKASTAGREVYRYMGWKGQPSTSELKNPERNISMGTAYLSILEHGVLKGIDDPEVMQYALVVSYVNGAGALLRTFSSDRKEAIEEINGMDKNEFVDHVAKNHPAPQAPRYIWKVQKAMDAM</sequence>
<name>EMTA_ENT38</name>
<keyword id="KW-0998">Cell outer membrane</keyword>
<keyword id="KW-0961">Cell wall biogenesis/degradation</keyword>
<keyword id="KW-0449">Lipoprotein</keyword>
<keyword id="KW-0456">Lyase</keyword>
<keyword id="KW-0472">Membrane</keyword>
<keyword id="KW-0564">Palmitate</keyword>
<keyword id="KW-0732">Signal</keyword>
<proteinExistence type="inferred from homology"/>
<evidence type="ECO:0000255" key="1">
    <source>
        <dbReference type="HAMAP-Rule" id="MF_01381"/>
    </source>
</evidence>
<dbReference type="EC" id="4.2.2.n2" evidence="1"/>
<dbReference type="EMBL" id="CP000653">
    <property type="protein sequence ID" value="ABP61028.1"/>
    <property type="molecule type" value="Genomic_DNA"/>
</dbReference>
<dbReference type="RefSeq" id="WP_012017742.1">
    <property type="nucleotide sequence ID" value="NC_009436.1"/>
</dbReference>
<dbReference type="SMR" id="A4WBE8"/>
<dbReference type="STRING" id="399742.Ent638_2359"/>
<dbReference type="CAZy" id="GH23">
    <property type="family name" value="Glycoside Hydrolase Family 23"/>
</dbReference>
<dbReference type="KEGG" id="ent:Ent638_2359"/>
<dbReference type="eggNOG" id="COG0741">
    <property type="taxonomic scope" value="Bacteria"/>
</dbReference>
<dbReference type="HOGENOM" id="CLU_103257_0_0_6"/>
<dbReference type="OrthoDB" id="92254at2"/>
<dbReference type="Proteomes" id="UP000000230">
    <property type="component" value="Chromosome"/>
</dbReference>
<dbReference type="GO" id="GO:0009279">
    <property type="term" value="C:cell outer membrane"/>
    <property type="evidence" value="ECO:0007669"/>
    <property type="project" value="UniProtKB-SubCell"/>
</dbReference>
<dbReference type="GO" id="GO:0008932">
    <property type="term" value="F:lytic endotransglycosylase activity"/>
    <property type="evidence" value="ECO:0007669"/>
    <property type="project" value="InterPro"/>
</dbReference>
<dbReference type="GO" id="GO:0016998">
    <property type="term" value="P:cell wall macromolecule catabolic process"/>
    <property type="evidence" value="ECO:0007669"/>
    <property type="project" value="UniProtKB-UniRule"/>
</dbReference>
<dbReference type="GO" id="GO:0071555">
    <property type="term" value="P:cell wall organization"/>
    <property type="evidence" value="ECO:0007669"/>
    <property type="project" value="UniProtKB-KW"/>
</dbReference>
<dbReference type="GO" id="GO:0000270">
    <property type="term" value="P:peptidoglycan metabolic process"/>
    <property type="evidence" value="ECO:0007669"/>
    <property type="project" value="InterPro"/>
</dbReference>
<dbReference type="CDD" id="cd16893">
    <property type="entry name" value="LT_MltC_MltE"/>
    <property type="match status" value="1"/>
</dbReference>
<dbReference type="Gene3D" id="1.10.530.10">
    <property type="match status" value="1"/>
</dbReference>
<dbReference type="HAMAP" id="MF_01381">
    <property type="entry name" value="EmtA"/>
    <property type="match status" value="1"/>
</dbReference>
<dbReference type="InterPro" id="IPR023946">
    <property type="entry name" value="EmtA"/>
</dbReference>
<dbReference type="InterPro" id="IPR023346">
    <property type="entry name" value="Lysozyme-like_dom_sf"/>
</dbReference>
<dbReference type="InterPro" id="IPR000189">
    <property type="entry name" value="Transglyc_AS"/>
</dbReference>
<dbReference type="InterPro" id="IPR008258">
    <property type="entry name" value="Transglycosylase_SLT_dom_1"/>
</dbReference>
<dbReference type="NCBIfam" id="NF012014">
    <property type="entry name" value="PRK15470.1"/>
    <property type="match status" value="1"/>
</dbReference>
<dbReference type="PANTHER" id="PTHR37423:SF4">
    <property type="entry name" value="ENDO-TYPE MEMBRANE-BOUND LYTIC MUREIN TRANSGLYCOSYLASE A"/>
    <property type="match status" value="1"/>
</dbReference>
<dbReference type="PANTHER" id="PTHR37423">
    <property type="entry name" value="SOLUBLE LYTIC MUREIN TRANSGLYCOSYLASE-RELATED"/>
    <property type="match status" value="1"/>
</dbReference>
<dbReference type="Pfam" id="PF01464">
    <property type="entry name" value="SLT"/>
    <property type="match status" value="1"/>
</dbReference>
<dbReference type="SUPFAM" id="SSF53955">
    <property type="entry name" value="Lysozyme-like"/>
    <property type="match status" value="1"/>
</dbReference>
<dbReference type="PROSITE" id="PS51257">
    <property type="entry name" value="PROKAR_LIPOPROTEIN"/>
    <property type="match status" value="1"/>
</dbReference>
<dbReference type="PROSITE" id="PS00922">
    <property type="entry name" value="TRANSGLYCOSYLASE"/>
    <property type="match status" value="1"/>
</dbReference>
<gene>
    <name evidence="1" type="primary">emtA</name>
    <name type="ordered locus">Ent638_2359</name>
</gene>
<feature type="signal peptide" evidence="1">
    <location>
        <begin position="1"/>
        <end position="15"/>
    </location>
</feature>
<feature type="chain" id="PRO_1000068260" description="Endo-type membrane-bound lytic murein transglycosylase A">
    <location>
        <begin position="16"/>
        <end position="203"/>
    </location>
</feature>
<feature type="lipid moiety-binding region" description="N-palmitoyl cysteine" evidence="1">
    <location>
        <position position="16"/>
    </location>
</feature>
<feature type="lipid moiety-binding region" description="S-diacylglycerol cysteine" evidence="1">
    <location>
        <position position="16"/>
    </location>
</feature>
<protein>
    <recommendedName>
        <fullName evidence="1">Endo-type membrane-bound lytic murein transglycosylase A</fullName>
        <ecNumber evidence="1">4.2.2.n2</ecNumber>
    </recommendedName>
    <alternativeName>
        <fullName evidence="1">Peptidoglycan lytic endotransglycosylase</fullName>
    </alternativeName>
</protein>